<protein>
    <recommendedName>
        <fullName evidence="2">3'-5' exonuclease</fullName>
        <ecNumber>3.1.11.-</ecNumber>
    </recommendedName>
    <alternativeName>
        <fullName>Werner Syndrome-like exonuclease</fullName>
    </alternativeName>
</protein>
<organism>
    <name type="scientific">Drosophila grimshawi</name>
    <name type="common">Hawaiian fruit fly</name>
    <name type="synonym">Idiomyia grimshawi</name>
    <dbReference type="NCBI Taxonomy" id="7222"/>
    <lineage>
        <taxon>Eukaryota</taxon>
        <taxon>Metazoa</taxon>
        <taxon>Ecdysozoa</taxon>
        <taxon>Arthropoda</taxon>
        <taxon>Hexapoda</taxon>
        <taxon>Insecta</taxon>
        <taxon>Pterygota</taxon>
        <taxon>Neoptera</taxon>
        <taxon>Endopterygota</taxon>
        <taxon>Diptera</taxon>
        <taxon>Brachycera</taxon>
        <taxon>Muscomorpha</taxon>
        <taxon>Ephydroidea</taxon>
        <taxon>Drosophilidae</taxon>
        <taxon>Drosophila</taxon>
        <taxon>Hawaiian Drosophila</taxon>
    </lineage>
</organism>
<comment type="function">
    <text evidence="2">Has exonuclease activity on both single-stranded and duplex templates bearing overhangs, but not blunt ended duplex DNA, and cleaves in a 3'-5' direction. Essential for the formation of DNA replication focal centers. Has an important role in maintaining genome stability.</text>
</comment>
<comment type="subcellular location">
    <subcellularLocation>
        <location evidence="2">Nucleus</location>
    </subcellularLocation>
</comment>
<comment type="similarity">
    <text evidence="5">Belongs to the WRNexo family.</text>
</comment>
<proteinExistence type="inferred from homology"/>
<evidence type="ECO:0000250" key="1">
    <source>
        <dbReference type="UniProtKB" id="Q14191"/>
    </source>
</evidence>
<evidence type="ECO:0000250" key="2">
    <source>
        <dbReference type="UniProtKB" id="Q9VE86"/>
    </source>
</evidence>
<evidence type="ECO:0000255" key="3"/>
<evidence type="ECO:0000256" key="4">
    <source>
        <dbReference type="SAM" id="MobiDB-lite"/>
    </source>
</evidence>
<evidence type="ECO:0000305" key="5"/>
<evidence type="ECO:0000312" key="6">
    <source>
        <dbReference type="EMBL" id="EDV93306.1"/>
    </source>
</evidence>
<name>WRNXO_DROGR</name>
<dbReference type="EC" id="3.1.11.-"/>
<dbReference type="EMBL" id="CH916369">
    <property type="protein sequence ID" value="EDV93306.1"/>
    <property type="molecule type" value="Genomic_DNA"/>
</dbReference>
<dbReference type="RefSeq" id="XP_001990244.1">
    <property type="nucleotide sequence ID" value="XM_001990208.1"/>
</dbReference>
<dbReference type="SMR" id="B4JF25"/>
<dbReference type="FunCoup" id="B4JF25">
    <property type="interactions" value="369"/>
</dbReference>
<dbReference type="STRING" id="7222.B4JF25"/>
<dbReference type="EnsemblMetazoa" id="FBtr0154645">
    <property type="protein sequence ID" value="FBpp0153137"/>
    <property type="gene ID" value="FBgn0126697"/>
</dbReference>
<dbReference type="EnsemblMetazoa" id="XM_043215125.1">
    <property type="protein sequence ID" value="XP_043071060.1"/>
    <property type="gene ID" value="LOC6563370"/>
</dbReference>
<dbReference type="eggNOG" id="KOG4373">
    <property type="taxonomic scope" value="Eukaryota"/>
</dbReference>
<dbReference type="HOGENOM" id="CLU_845357_0_0_1"/>
<dbReference type="InParanoid" id="B4JF25"/>
<dbReference type="OMA" id="CCYVYQL"/>
<dbReference type="OrthoDB" id="10261556at2759"/>
<dbReference type="PhylomeDB" id="B4JF25"/>
<dbReference type="ChiTaRS" id="WRNexo">
    <property type="organism name" value="fly"/>
</dbReference>
<dbReference type="Proteomes" id="UP000001070">
    <property type="component" value="Unassembled WGS sequence"/>
</dbReference>
<dbReference type="GO" id="GO:0005634">
    <property type="term" value="C:nucleus"/>
    <property type="evidence" value="ECO:0000250"/>
    <property type="project" value="UniProtKB"/>
</dbReference>
<dbReference type="GO" id="GO:0008408">
    <property type="term" value="F:3'-5' exonuclease activity"/>
    <property type="evidence" value="ECO:0000250"/>
    <property type="project" value="UniProtKB"/>
</dbReference>
<dbReference type="GO" id="GO:0046872">
    <property type="term" value="F:metal ion binding"/>
    <property type="evidence" value="ECO:0007669"/>
    <property type="project" value="UniProtKB-KW"/>
</dbReference>
<dbReference type="GO" id="GO:0003676">
    <property type="term" value="F:nucleic acid binding"/>
    <property type="evidence" value="ECO:0007669"/>
    <property type="project" value="InterPro"/>
</dbReference>
<dbReference type="GO" id="GO:0045950">
    <property type="term" value="P:negative regulation of mitotic recombination"/>
    <property type="evidence" value="ECO:0000250"/>
    <property type="project" value="UniProtKB"/>
</dbReference>
<dbReference type="GO" id="GO:0006139">
    <property type="term" value="P:nucleobase-containing compound metabolic process"/>
    <property type="evidence" value="ECO:0007669"/>
    <property type="project" value="InterPro"/>
</dbReference>
<dbReference type="CDD" id="cd06141">
    <property type="entry name" value="WRN_exo"/>
    <property type="match status" value="1"/>
</dbReference>
<dbReference type="FunFam" id="3.30.420.10:FF:000104">
    <property type="entry name" value="Werner Syndrome-like exonuclease"/>
    <property type="match status" value="1"/>
</dbReference>
<dbReference type="Gene3D" id="3.30.420.10">
    <property type="entry name" value="Ribonuclease H-like superfamily/Ribonuclease H"/>
    <property type="match status" value="1"/>
</dbReference>
<dbReference type="InterPro" id="IPR002562">
    <property type="entry name" value="3'-5'_exonuclease_dom"/>
</dbReference>
<dbReference type="InterPro" id="IPR051132">
    <property type="entry name" value="3-5_Exonuclease_domain"/>
</dbReference>
<dbReference type="InterPro" id="IPR012337">
    <property type="entry name" value="RNaseH-like_sf"/>
</dbReference>
<dbReference type="InterPro" id="IPR036397">
    <property type="entry name" value="RNaseH_sf"/>
</dbReference>
<dbReference type="PANTHER" id="PTHR13620:SF109">
    <property type="entry name" value="3'-5' EXONUCLEASE"/>
    <property type="match status" value="1"/>
</dbReference>
<dbReference type="PANTHER" id="PTHR13620">
    <property type="entry name" value="3-5 EXONUCLEASE"/>
    <property type="match status" value="1"/>
</dbReference>
<dbReference type="Pfam" id="PF01612">
    <property type="entry name" value="DNA_pol_A_exo1"/>
    <property type="match status" value="1"/>
</dbReference>
<dbReference type="SMART" id="SM00474">
    <property type="entry name" value="35EXOc"/>
    <property type="match status" value="1"/>
</dbReference>
<dbReference type="SUPFAM" id="SSF53098">
    <property type="entry name" value="Ribonuclease H-like"/>
    <property type="match status" value="1"/>
</dbReference>
<sequence length="331" mass="37912">MDKYLIKMPVKLNSIEVTEKKISAKEERVKQTNAAKKQIATNNNKRKNQDTPEMIKDKENAESENPPKRRSSRVTRSMRSMAEDGPASPEKEIPKKLPFIKYSGAIKYFTESQEIAASADEVMQWVEKQINMDVVPMAFDMEWPFSFQTGPGKSSVIQICVDERCCYVYQLSKLNKIPAALAALINHPKVRLHGVNIKADFRKLERDFPEMSAEPLIEKCVDLGVWCNQVCETGGRWSLERLANFIAKKAMDKSKKVRMSKWHVIPLDENQLMYAAIDVYIGQVIYREIEQRETVKLKNEAEFKEQNGDAAFKLVKGLGENFLSKINEVTI</sequence>
<reference evidence="6" key="1">
    <citation type="journal article" date="2007" name="Nature">
        <title>Evolution of genes and genomes on the Drosophila phylogeny.</title>
        <authorList>
            <consortium name="Drosophila 12 genomes consortium"/>
        </authorList>
    </citation>
    <scope>NUCLEOTIDE SEQUENCE [LARGE SCALE GENOMIC DNA]</scope>
    <source>
        <strain evidence="6">Tucson 15287-2541.00</strain>
    </source>
</reference>
<accession>B4JF25</accession>
<keyword id="KW-0269">Exonuclease</keyword>
<keyword id="KW-0378">Hydrolase</keyword>
<keyword id="KW-0460">Magnesium</keyword>
<keyword id="KW-0479">Metal-binding</keyword>
<keyword id="KW-0540">Nuclease</keyword>
<keyword id="KW-0539">Nucleus</keyword>
<keyword id="KW-0597">Phosphoprotein</keyword>
<keyword id="KW-1185">Reference proteome</keyword>
<gene>
    <name evidence="2" type="primary">WRNexo</name>
    <name type="ORF">GH19231</name>
</gene>
<feature type="chain" id="PRO_0000399375" description="3'-5' exonuclease">
    <location>
        <begin position="1"/>
        <end position="331"/>
    </location>
</feature>
<feature type="domain" description="3'-5' exonuclease" evidence="3">
    <location>
        <begin position="118"/>
        <end position="290"/>
    </location>
</feature>
<feature type="region of interest" description="Disordered" evidence="4">
    <location>
        <begin position="27"/>
        <end position="92"/>
    </location>
</feature>
<feature type="compositionally biased region" description="Polar residues" evidence="4">
    <location>
        <begin position="31"/>
        <end position="43"/>
    </location>
</feature>
<feature type="compositionally biased region" description="Basic and acidic residues" evidence="4">
    <location>
        <begin position="47"/>
        <end position="67"/>
    </location>
</feature>
<feature type="binding site" evidence="2">
    <location>
        <position position="140"/>
    </location>
    <ligand>
        <name>Mg(2+)</name>
        <dbReference type="ChEBI" id="CHEBI:18420"/>
        <label>1</label>
        <note>catalytic</note>
    </ligand>
</feature>
<feature type="binding site" evidence="2">
    <location>
        <position position="140"/>
    </location>
    <ligand>
        <name>Mg(2+)</name>
        <dbReference type="ChEBI" id="CHEBI:18420"/>
        <label>2</label>
        <note>catalytic</note>
    </ligand>
</feature>
<feature type="binding site" evidence="2">
    <location>
        <position position="142"/>
    </location>
    <ligand>
        <name>Mg(2+)</name>
        <dbReference type="ChEBI" id="CHEBI:18420"/>
        <label>1</label>
        <note>catalytic</note>
    </ligand>
</feature>
<feature type="binding site" evidence="1">
    <location>
        <position position="278"/>
    </location>
    <ligand>
        <name>Mg(2+)</name>
        <dbReference type="ChEBI" id="CHEBI:18420"/>
        <label>1</label>
        <note>catalytic</note>
    </ligand>
</feature>
<feature type="modified residue" description="Phosphoserine" evidence="2">
    <location>
        <position position="80"/>
    </location>
</feature>
<feature type="modified residue" description="Phosphoserine" evidence="2">
    <location>
        <position position="88"/>
    </location>
</feature>